<protein>
    <recommendedName>
        <fullName evidence="1">Phosphate import ATP-binding protein PstB 1</fullName>
        <ecNumber evidence="1">7.3.2.1</ecNumber>
    </recommendedName>
    <alternativeName>
        <fullName evidence="1">ABC phosphate transporter 1</fullName>
    </alternativeName>
    <alternativeName>
        <fullName evidence="1">Phosphate-transporting ATPase 1</fullName>
    </alternativeName>
</protein>
<dbReference type="EC" id="7.3.2.1" evidence="1"/>
<dbReference type="EMBL" id="CP000056">
    <property type="protein sequence ID" value="AAX72037.1"/>
    <property type="molecule type" value="Genomic_DNA"/>
</dbReference>
<dbReference type="SMR" id="Q48TC3"/>
<dbReference type="KEGG" id="spb:M28_Spy0924"/>
<dbReference type="HOGENOM" id="CLU_000604_1_22_9"/>
<dbReference type="GO" id="GO:0005886">
    <property type="term" value="C:plasma membrane"/>
    <property type="evidence" value="ECO:0007669"/>
    <property type="project" value="UniProtKB-SubCell"/>
</dbReference>
<dbReference type="GO" id="GO:0005524">
    <property type="term" value="F:ATP binding"/>
    <property type="evidence" value="ECO:0007669"/>
    <property type="project" value="UniProtKB-KW"/>
</dbReference>
<dbReference type="GO" id="GO:0016887">
    <property type="term" value="F:ATP hydrolysis activity"/>
    <property type="evidence" value="ECO:0007669"/>
    <property type="project" value="InterPro"/>
</dbReference>
<dbReference type="GO" id="GO:0015415">
    <property type="term" value="F:ATPase-coupled phosphate ion transmembrane transporter activity"/>
    <property type="evidence" value="ECO:0007669"/>
    <property type="project" value="UniProtKB-EC"/>
</dbReference>
<dbReference type="GO" id="GO:0035435">
    <property type="term" value="P:phosphate ion transmembrane transport"/>
    <property type="evidence" value="ECO:0007669"/>
    <property type="project" value="InterPro"/>
</dbReference>
<dbReference type="CDD" id="cd03260">
    <property type="entry name" value="ABC_PstB_phosphate_transporter"/>
    <property type="match status" value="1"/>
</dbReference>
<dbReference type="Gene3D" id="3.40.50.300">
    <property type="entry name" value="P-loop containing nucleotide triphosphate hydrolases"/>
    <property type="match status" value="1"/>
</dbReference>
<dbReference type="InterPro" id="IPR003593">
    <property type="entry name" value="AAA+_ATPase"/>
</dbReference>
<dbReference type="InterPro" id="IPR003439">
    <property type="entry name" value="ABC_transporter-like_ATP-bd"/>
</dbReference>
<dbReference type="InterPro" id="IPR017871">
    <property type="entry name" value="ABC_transporter-like_CS"/>
</dbReference>
<dbReference type="InterPro" id="IPR027417">
    <property type="entry name" value="P-loop_NTPase"/>
</dbReference>
<dbReference type="InterPro" id="IPR005670">
    <property type="entry name" value="PstB-like"/>
</dbReference>
<dbReference type="NCBIfam" id="TIGR00972">
    <property type="entry name" value="3a0107s01c2"/>
    <property type="match status" value="1"/>
</dbReference>
<dbReference type="PANTHER" id="PTHR43423">
    <property type="entry name" value="ABC TRANSPORTER I FAMILY MEMBER 17"/>
    <property type="match status" value="1"/>
</dbReference>
<dbReference type="PANTHER" id="PTHR43423:SF1">
    <property type="entry name" value="ABC TRANSPORTER I FAMILY MEMBER 17"/>
    <property type="match status" value="1"/>
</dbReference>
<dbReference type="Pfam" id="PF00005">
    <property type="entry name" value="ABC_tran"/>
    <property type="match status" value="1"/>
</dbReference>
<dbReference type="SMART" id="SM00382">
    <property type="entry name" value="AAA"/>
    <property type="match status" value="1"/>
</dbReference>
<dbReference type="SUPFAM" id="SSF52540">
    <property type="entry name" value="P-loop containing nucleoside triphosphate hydrolases"/>
    <property type="match status" value="1"/>
</dbReference>
<dbReference type="PROSITE" id="PS00211">
    <property type="entry name" value="ABC_TRANSPORTER_1"/>
    <property type="match status" value="1"/>
</dbReference>
<dbReference type="PROSITE" id="PS50893">
    <property type="entry name" value="ABC_TRANSPORTER_2"/>
    <property type="match status" value="1"/>
</dbReference>
<dbReference type="PROSITE" id="PS51238">
    <property type="entry name" value="PSTB"/>
    <property type="match status" value="1"/>
</dbReference>
<gene>
    <name evidence="1" type="primary">pstB1</name>
    <name type="ordered locus">M28_Spy0924</name>
</gene>
<organism>
    <name type="scientific">Streptococcus pyogenes serotype M28 (strain MGAS6180)</name>
    <dbReference type="NCBI Taxonomy" id="319701"/>
    <lineage>
        <taxon>Bacteria</taxon>
        <taxon>Bacillati</taxon>
        <taxon>Bacillota</taxon>
        <taxon>Bacilli</taxon>
        <taxon>Lactobacillales</taxon>
        <taxon>Streptococcaceae</taxon>
        <taxon>Streptococcus</taxon>
    </lineage>
</organism>
<name>PSTB1_STRPM</name>
<keyword id="KW-0067">ATP-binding</keyword>
<keyword id="KW-1003">Cell membrane</keyword>
<keyword id="KW-0472">Membrane</keyword>
<keyword id="KW-0547">Nucleotide-binding</keyword>
<keyword id="KW-0592">Phosphate transport</keyword>
<keyword id="KW-1278">Translocase</keyword>
<keyword id="KW-0813">Transport</keyword>
<sequence>MMTEPILQIRDLSVYYNQKKTLKDVSLDLYPNEITALIGPSGSGKSTLLRSINRMNDLNPEVTITGSIVYNGHNIYSPRTDTVDLRKEIGMVFQQPNPFPMSIYENVVYGLRLKGIRDKSILDHAVESSLKGASIWNEVKDRLHDSAVGLSGGQQQRVCIARVLATSPRIILLDEPTSALDPISAGKIEETLLLLKKDYTLAIVTRSMQQASRLSDRTGFFLEGDLLECGPTKAMFMNPKRKETEDYISGKFG</sequence>
<comment type="function">
    <text evidence="1">Part of the ABC transporter complex PstSACB involved in phosphate import. Responsible for energy coupling to the transport system.</text>
</comment>
<comment type="catalytic activity">
    <reaction evidence="1">
        <text>phosphate(out) + ATP + H2O = ADP + 2 phosphate(in) + H(+)</text>
        <dbReference type="Rhea" id="RHEA:24440"/>
        <dbReference type="ChEBI" id="CHEBI:15377"/>
        <dbReference type="ChEBI" id="CHEBI:15378"/>
        <dbReference type="ChEBI" id="CHEBI:30616"/>
        <dbReference type="ChEBI" id="CHEBI:43474"/>
        <dbReference type="ChEBI" id="CHEBI:456216"/>
        <dbReference type="EC" id="7.3.2.1"/>
    </reaction>
</comment>
<comment type="subunit">
    <text evidence="1">The complex is composed of two ATP-binding proteins (PstB), two transmembrane proteins (PstC and PstA) and a solute-binding protein (PstS).</text>
</comment>
<comment type="subcellular location">
    <subcellularLocation>
        <location evidence="1">Cell membrane</location>
        <topology evidence="1">Peripheral membrane protein</topology>
    </subcellularLocation>
</comment>
<comment type="similarity">
    <text evidence="1">Belongs to the ABC transporter superfamily. Phosphate importer (TC 3.A.1.7) family.</text>
</comment>
<accession>Q48TC3</accession>
<feature type="chain" id="PRO_0000272547" description="Phosphate import ATP-binding protein PstB 1">
    <location>
        <begin position="1"/>
        <end position="253"/>
    </location>
</feature>
<feature type="domain" description="ABC transporter" evidence="1">
    <location>
        <begin position="7"/>
        <end position="248"/>
    </location>
</feature>
<feature type="binding site" evidence="1">
    <location>
        <begin position="39"/>
        <end position="46"/>
    </location>
    <ligand>
        <name>ATP</name>
        <dbReference type="ChEBI" id="CHEBI:30616"/>
    </ligand>
</feature>
<proteinExistence type="inferred from homology"/>
<evidence type="ECO:0000255" key="1">
    <source>
        <dbReference type="HAMAP-Rule" id="MF_01702"/>
    </source>
</evidence>
<reference key="1">
    <citation type="journal article" date="2005" name="J. Infect. Dis.">
        <title>Genome sequence of a serotype M28 strain of group A Streptococcus: potential new insights into puerperal sepsis and bacterial disease specificity.</title>
        <authorList>
            <person name="Green N.M."/>
            <person name="Zhang S."/>
            <person name="Porcella S.F."/>
            <person name="Nagiec M.J."/>
            <person name="Barbian K.D."/>
            <person name="Beres S.B."/>
            <person name="Lefebvre R.B."/>
            <person name="Musser J.M."/>
        </authorList>
    </citation>
    <scope>NUCLEOTIDE SEQUENCE [LARGE SCALE GENOMIC DNA]</scope>
    <source>
        <strain>MGAS6180</strain>
    </source>
</reference>